<keyword id="KW-0052">Apoplast</keyword>
<keyword id="KW-1003">Cell membrane</keyword>
<keyword id="KW-0165">Cleavage on pair of basic residues</keyword>
<keyword id="KW-0472">Membrane</keyword>
<keyword id="KW-1185">Reference proteome</keyword>
<keyword id="KW-0964">Secreted</keyword>
<keyword id="KW-0732">Signal</keyword>
<comment type="function">
    <text evidence="4">Brassicaceae-specific phytocytokine (plant endogenous peptide released into the apoplast) perceived by MIK2 in a BAK1/SERK3 and SERK4 coreceptors-dependent manner, that modulates various physiological and antimicrobial processes including growth prevention and reactive oxygen species (ROS) response regulation.</text>
</comment>
<comment type="subunit">
    <text evidence="1">Interacts with MIK2 (via extracellular leucine-rich repeat domain); this interaction triggers the formation of complex between MIK2 and the BAK1/SERK3 and SERK4 coreceptors, and subsequent BAK1 activation by phosphorylation.</text>
</comment>
<comment type="subcellular location">
    <subcellularLocation>
        <location evidence="1">Cell membrane</location>
    </subcellularLocation>
    <subcellularLocation>
        <location evidence="1">Secreted</location>
        <location evidence="1">Extracellular space</location>
        <location evidence="1">Apoplast</location>
    </subcellularLocation>
    <text evidence="1">The precursor of SCOOP5, PROSCOOP5, accumulates at the plasma membrane and is proteolytically cleaved to release the SCOOP5 in the apoplasm.</text>
</comment>
<comment type="induction">
    <text evidence="5">Accumulates upon infection by generalist herbivores such as Spodoptera littoralis (PubMed:35401621). Induced by wounding (PubMed:35401621).</text>
</comment>
<comment type="sequence caution" evidence="8">
    <conflict type="erroneous gene model prediction">
        <sequence resource="EMBL-CDS" id="AED95127"/>
    </conflict>
</comment>
<comment type="sequence caution" evidence="8">
    <conflict type="erroneous gene model prediction">
        <sequence resource="EMBL-CDS" id="BAA98110"/>
    </conflict>
</comment>
<protein>
    <recommendedName>
        <fullName evidence="6 7">Serine rich endogenous peptide 5</fullName>
        <shortName evidence="6 7">AtSCOOP5</shortName>
    </recommendedName>
    <alternativeName>
        <fullName evidence="6 7">Phytocytokine SCOOP5</fullName>
    </alternativeName>
    <alternativeName>
        <fullName evidence="6 7">Precursor of serine rich endogenous peptide phytocytokine 5</fullName>
    </alternativeName>
</protein>
<feature type="signal peptide" evidence="2">
    <location>
        <begin position="1"/>
        <end position="31"/>
    </location>
</feature>
<feature type="propeptide" id="PRO_0000457222" description="Removed in mature form" evidence="1">
    <location>
        <begin position="32"/>
        <end status="unknown"/>
    </location>
</feature>
<feature type="peptide" id="PRO_0000457223" description="Serine rich endogenous peptide 5" evidence="1">
    <location>
        <begin status="unknown"/>
        <end position="117"/>
    </location>
</feature>
<feature type="region of interest" description="Disordered" evidence="3">
    <location>
        <begin position="42"/>
        <end position="117"/>
    </location>
</feature>
<feature type="short sequence motif" description="SCOOP motif" evidence="9">
    <location>
        <begin position="41"/>
        <end position="55"/>
    </location>
</feature>
<feature type="short sequence motif" description="SxS motif essential for MIK2 binding" evidence="1">
    <location>
        <begin position="47"/>
        <end position="49"/>
    </location>
</feature>
<feature type="compositionally biased region" description="Basic residues" evidence="3">
    <location>
        <begin position="42"/>
        <end position="51"/>
    </location>
</feature>
<feature type="compositionally biased region" description="Pro residues" evidence="3">
    <location>
        <begin position="60"/>
        <end position="84"/>
    </location>
</feature>
<dbReference type="EMBL" id="AB024024">
    <property type="protein sequence ID" value="BAA98110.1"/>
    <property type="status" value="ALT_SEQ"/>
    <property type="molecule type" value="Genomic_DNA"/>
</dbReference>
<dbReference type="EMBL" id="CP002688">
    <property type="protein sequence ID" value="AED95127.1"/>
    <property type="status" value="ALT_SEQ"/>
    <property type="molecule type" value="Genomic_DNA"/>
</dbReference>
<dbReference type="EMBL" id="CP002688">
    <property type="protein sequence ID" value="ANM70265.1"/>
    <property type="molecule type" value="Genomic_DNA"/>
</dbReference>
<dbReference type="EMBL" id="AK221921">
    <property type="protein sequence ID" value="BAD94335.1"/>
    <property type="molecule type" value="mRNA"/>
</dbReference>
<dbReference type="RefSeq" id="NP_001331891.1">
    <property type="nucleotide sequence ID" value="NM_001344565.1"/>
</dbReference>
<dbReference type="RefSeq" id="NP_199270.1">
    <property type="nucleotide sequence ID" value="NM_123824.6"/>
</dbReference>
<dbReference type="GlyGen" id="Q56WV9">
    <property type="glycosylation" value="1 site"/>
</dbReference>
<dbReference type="EnsemblPlants" id="AT5G44570.3">
    <property type="protein sequence ID" value="AT5G44570.3"/>
    <property type="gene ID" value="AT5G44570"/>
</dbReference>
<dbReference type="GeneID" id="834484"/>
<dbReference type="Gramene" id="AT5G44570.3">
    <property type="protein sequence ID" value="AT5G44570.3"/>
    <property type="gene ID" value="AT5G44570"/>
</dbReference>
<dbReference type="KEGG" id="ath:AT5G44570"/>
<dbReference type="Araport" id="AT5G44570"/>
<dbReference type="TAIR" id="AT5G44570"/>
<dbReference type="PRO" id="PR:Q56WV9"/>
<dbReference type="Proteomes" id="UP000006548">
    <property type="component" value="Chromosome 5"/>
</dbReference>
<dbReference type="ExpressionAtlas" id="Q56WV9">
    <property type="expression patterns" value="baseline and differential"/>
</dbReference>
<dbReference type="GO" id="GO:0048046">
    <property type="term" value="C:apoplast"/>
    <property type="evidence" value="ECO:0000250"/>
    <property type="project" value="UniProtKB"/>
</dbReference>
<dbReference type="GO" id="GO:0005886">
    <property type="term" value="C:plasma membrane"/>
    <property type="evidence" value="ECO:0007669"/>
    <property type="project" value="UniProtKB-SubCell"/>
</dbReference>
<dbReference type="GO" id="GO:0030275">
    <property type="term" value="F:LRR domain binding"/>
    <property type="evidence" value="ECO:0000250"/>
    <property type="project" value="UniProtKB"/>
</dbReference>
<dbReference type="GO" id="GO:0033612">
    <property type="term" value="F:receptor serine/threonine kinase binding"/>
    <property type="evidence" value="ECO:0000250"/>
    <property type="project" value="UniProtKB"/>
</dbReference>
<dbReference type="GO" id="GO:0080027">
    <property type="term" value="P:response to herbivore"/>
    <property type="evidence" value="ECO:0000270"/>
    <property type="project" value="UniProtKB"/>
</dbReference>
<dbReference type="GO" id="GO:0009625">
    <property type="term" value="P:response to insect"/>
    <property type="evidence" value="ECO:0000270"/>
    <property type="project" value="UniProtKB"/>
</dbReference>
<dbReference type="GO" id="GO:0009611">
    <property type="term" value="P:response to wounding"/>
    <property type="evidence" value="ECO:0000270"/>
    <property type="project" value="UniProtKB"/>
</dbReference>
<name>SCOP5_ARATH</name>
<proteinExistence type="evidence at transcript level"/>
<accession>Q56WV9</accession>
<accession>Q9LU09</accession>
<evidence type="ECO:0000250" key="1">
    <source>
        <dbReference type="UniProtKB" id="B3H7I1"/>
    </source>
</evidence>
<evidence type="ECO:0000255" key="2"/>
<evidence type="ECO:0000256" key="3">
    <source>
        <dbReference type="SAM" id="MobiDB-lite"/>
    </source>
</evidence>
<evidence type="ECO:0000269" key="4">
    <source>
    </source>
</evidence>
<evidence type="ECO:0000269" key="5">
    <source>
    </source>
</evidence>
<evidence type="ECO:0000303" key="6">
    <source>
    </source>
</evidence>
<evidence type="ECO:0000303" key="7">
    <source>
    </source>
</evidence>
<evidence type="ECO:0000305" key="8"/>
<evidence type="ECO:0000305" key="9">
    <source>
    </source>
</evidence>
<evidence type="ECO:0000312" key="10">
    <source>
        <dbReference type="Araport" id="AT5G44570"/>
    </source>
</evidence>
<evidence type="ECO:0000312" key="11">
    <source>
        <dbReference type="EMBL" id="BAA98110.1"/>
    </source>
</evidence>
<sequence length="117" mass="12996">MATKTSNFVSLRVSLFILLLFISSQVAIADAKHLQQLRRKLQIVRRSRSQRGRQYNPPTLRVPPPPPPPLPQMPSAATPPPMPQLSPLQPKMHVSSLQPQMLYPPPSLPYASSPTST</sequence>
<reference key="1">
    <citation type="submission" date="1999-02" db="EMBL/GenBank/DDBJ databases">
        <title>Structural analysis of Arabidopsis thaliana chromosome 5. XI.</title>
        <authorList>
            <person name="Kaneko T."/>
            <person name="Katoh T."/>
            <person name="Asamizu E."/>
            <person name="Sato S."/>
            <person name="Nakamura Y."/>
            <person name="Kotani H."/>
            <person name="Tabata S."/>
        </authorList>
    </citation>
    <scope>NUCLEOTIDE SEQUENCE [LARGE SCALE GENOMIC DNA]</scope>
    <source>
        <strain>cv. Columbia</strain>
    </source>
</reference>
<reference key="2">
    <citation type="journal article" date="2017" name="Plant J.">
        <title>Araport11: a complete reannotation of the Arabidopsis thaliana reference genome.</title>
        <authorList>
            <person name="Cheng C.Y."/>
            <person name="Krishnakumar V."/>
            <person name="Chan A.P."/>
            <person name="Thibaud-Nissen F."/>
            <person name="Schobel S."/>
            <person name="Town C.D."/>
        </authorList>
    </citation>
    <scope>GENOME REANNOTATION</scope>
    <source>
        <strain>cv. Columbia</strain>
    </source>
</reference>
<reference key="3">
    <citation type="submission" date="2005-03" db="EMBL/GenBank/DDBJ databases">
        <title>Large-scale analysis of RIKEN Arabidopsis full-length (RAFL) cDNAs.</title>
        <authorList>
            <person name="Totoki Y."/>
            <person name="Seki M."/>
            <person name="Ishida J."/>
            <person name="Nakajima M."/>
            <person name="Enju A."/>
            <person name="Kamiya A."/>
            <person name="Narusaka M."/>
            <person name="Shin-i T."/>
            <person name="Nakagawa M."/>
            <person name="Sakamoto N."/>
            <person name="Oishi K."/>
            <person name="Kohara Y."/>
            <person name="Kobayashi M."/>
            <person name="Toyoda A."/>
            <person name="Sakaki Y."/>
            <person name="Sakurai T."/>
            <person name="Iida K."/>
            <person name="Akiyama K."/>
            <person name="Satou M."/>
            <person name="Toyoda T."/>
            <person name="Konagaya A."/>
            <person name="Carninci P."/>
            <person name="Kawai J."/>
            <person name="Hayashizaki Y."/>
            <person name="Shinozaki K."/>
        </authorList>
    </citation>
    <scope>NUCLEOTIDE SEQUENCE [LARGE SCALE MRNA]</scope>
    <source>
        <strain>cv. Columbia</strain>
    </source>
</reference>
<reference key="4">
    <citation type="journal article" date="2019" name="J. Exp. Bot.">
        <title>The SCOOP12 peptide regulates defense response and root elongation in Arabidopsis thaliana.</title>
        <authorList>
            <person name="Gully K."/>
            <person name="Pelletier S."/>
            <person name="Guillou M.-C."/>
            <person name="Ferrand M."/>
            <person name="Aligon S."/>
            <person name="Pokotylo I."/>
            <person name="Perrin A."/>
            <person name="Vergne E."/>
            <person name="Fagard M."/>
            <person name="Ruelland E."/>
            <person name="Grappin P."/>
            <person name="Bucher E."/>
            <person name="Renou J.-P."/>
            <person name="Aubourg S."/>
        </authorList>
    </citation>
    <scope>GENE FAMILY</scope>
    <source>
        <strain>cv. Columbia</strain>
        <strain>cv. Wassilewskija</strain>
    </source>
</reference>
<reference key="5">
    <citation type="journal article" date="2021" name="Nat. Commun.">
        <title>Perception of a divergent family of phytocytokines by the Arabidopsis receptor kinase MIK2.</title>
        <authorList>
            <person name="Rhodes J."/>
            <person name="Yang H."/>
            <person name="Moussu S."/>
            <person name="Boutrot F."/>
            <person name="Santiago J."/>
            <person name="Zipfel C."/>
        </authorList>
    </citation>
    <scope>FUNCTION</scope>
    <scope>GENE FAMILY</scope>
    <source>
        <strain>cv. Columbia</strain>
        <strain>cv. Wassilewskija-2</strain>
    </source>
</reference>
<reference key="6">
    <citation type="journal article" date="2021" name="Nat. Commun.">
        <title>The Arabidopsis MIK2 receptor elicits immunity by sensing a conserved signature from phytocytokines and microbes.</title>
        <authorList>
            <person name="Hou S."/>
            <person name="Liu D."/>
            <person name="Huang S."/>
            <person name="Luo D."/>
            <person name="Liu Z."/>
            <person name="Xiang Q."/>
            <person name="Wang P."/>
            <person name="Mu R."/>
            <person name="Han Z."/>
            <person name="Chen S."/>
            <person name="Chai J."/>
            <person name="Shan L."/>
            <person name="He P."/>
        </authorList>
    </citation>
    <scope>GENE FAMILY</scope>
    <scope>NOMENCLATURE</scope>
    <source>
        <strain>cv. Columbia</strain>
    </source>
</reference>
<reference key="7">
    <citation type="journal article" date="2022" name="Front. Plant Sci.">
        <title>The MIK2/SCOOP signaling system contributes to Arabidopsis resistance against herbivory by modulating jasmonate and indole glucosinolate biosynthesis.</title>
        <authorList>
            <person name="Stahl E."/>
            <person name="Fernandez Martin A."/>
            <person name="Glauser G."/>
            <person name="Guillou M.-C."/>
            <person name="Aubourg S."/>
            <person name="Renou J.-P."/>
            <person name="Reymond P."/>
        </authorList>
    </citation>
    <scope>INDUCTION BY INSECT HERBIVORY AND WOUNDING</scope>
    <source>
        <strain>cv. Columbia</strain>
        <strain>cv. Wassilewskija</strain>
    </source>
</reference>
<organism>
    <name type="scientific">Arabidopsis thaliana</name>
    <name type="common">Mouse-ear cress</name>
    <dbReference type="NCBI Taxonomy" id="3702"/>
    <lineage>
        <taxon>Eukaryota</taxon>
        <taxon>Viridiplantae</taxon>
        <taxon>Streptophyta</taxon>
        <taxon>Embryophyta</taxon>
        <taxon>Tracheophyta</taxon>
        <taxon>Spermatophyta</taxon>
        <taxon>Magnoliopsida</taxon>
        <taxon>eudicotyledons</taxon>
        <taxon>Gunneridae</taxon>
        <taxon>Pentapetalae</taxon>
        <taxon>rosids</taxon>
        <taxon>malvids</taxon>
        <taxon>Brassicales</taxon>
        <taxon>Brassicaceae</taxon>
        <taxon>Camelineae</taxon>
        <taxon>Arabidopsis</taxon>
    </lineage>
</organism>
<gene>
    <name evidence="6 7" type="primary">PROSCOOP5</name>
    <name evidence="6 7" type="synonym">SCOOP5</name>
    <name evidence="10" type="ordered locus">At5g44570</name>
    <name evidence="11" type="ORF">K15C23.1</name>
</gene>